<evidence type="ECO:0000255" key="1">
    <source>
        <dbReference type="HAMAP-Rule" id="MF_00693"/>
    </source>
</evidence>
<keyword id="KW-0963">Cytoplasm</keyword>
<keyword id="KW-0238">DNA-binding</keyword>
<keyword id="KW-0804">Transcription</keyword>
<keyword id="KW-0805">Transcription regulation</keyword>
<organism>
    <name type="scientific">Brucella ovis (strain ATCC 25840 / 63/290 / NCTC 10512)</name>
    <dbReference type="NCBI Taxonomy" id="444178"/>
    <lineage>
        <taxon>Bacteria</taxon>
        <taxon>Pseudomonadati</taxon>
        <taxon>Pseudomonadota</taxon>
        <taxon>Alphaproteobacteria</taxon>
        <taxon>Hyphomicrobiales</taxon>
        <taxon>Brucellaceae</taxon>
        <taxon>Brucella/Ochrobactrum group</taxon>
        <taxon>Brucella</taxon>
    </lineage>
</organism>
<dbReference type="EMBL" id="CP000708">
    <property type="protein sequence ID" value="ABQ60221.1"/>
    <property type="molecule type" value="Genomic_DNA"/>
</dbReference>
<dbReference type="RefSeq" id="WP_002964805.1">
    <property type="nucleotide sequence ID" value="NC_009505.1"/>
</dbReference>
<dbReference type="SMR" id="A5VS72"/>
<dbReference type="KEGG" id="bov:BOV_1660"/>
<dbReference type="HOGENOM" id="CLU_062974_2_2_5"/>
<dbReference type="PhylomeDB" id="A5VS72"/>
<dbReference type="Proteomes" id="UP000006383">
    <property type="component" value="Chromosome I"/>
</dbReference>
<dbReference type="GO" id="GO:0005829">
    <property type="term" value="C:cytosol"/>
    <property type="evidence" value="ECO:0007669"/>
    <property type="project" value="TreeGrafter"/>
</dbReference>
<dbReference type="GO" id="GO:0003677">
    <property type="term" value="F:DNA binding"/>
    <property type="evidence" value="ECO:0007669"/>
    <property type="project" value="UniProtKB-UniRule"/>
</dbReference>
<dbReference type="GO" id="GO:0006355">
    <property type="term" value="P:regulation of DNA-templated transcription"/>
    <property type="evidence" value="ECO:0007669"/>
    <property type="project" value="UniProtKB-UniRule"/>
</dbReference>
<dbReference type="FunFam" id="1.10.10.200:FF:000002">
    <property type="entry name" value="Probable transcriptional regulatory protein CLM62_37755"/>
    <property type="match status" value="1"/>
</dbReference>
<dbReference type="Gene3D" id="1.10.10.200">
    <property type="match status" value="1"/>
</dbReference>
<dbReference type="Gene3D" id="3.30.70.980">
    <property type="match status" value="2"/>
</dbReference>
<dbReference type="HAMAP" id="MF_00693">
    <property type="entry name" value="Transcrip_reg_TACO1"/>
    <property type="match status" value="1"/>
</dbReference>
<dbReference type="InterPro" id="IPR017856">
    <property type="entry name" value="Integrase-like_N"/>
</dbReference>
<dbReference type="InterPro" id="IPR048300">
    <property type="entry name" value="TACO1_YebC-like_2nd/3rd_dom"/>
</dbReference>
<dbReference type="InterPro" id="IPR049083">
    <property type="entry name" value="TACO1_YebC_N"/>
</dbReference>
<dbReference type="InterPro" id="IPR002876">
    <property type="entry name" value="Transcrip_reg_TACO1-like"/>
</dbReference>
<dbReference type="InterPro" id="IPR026564">
    <property type="entry name" value="Transcrip_reg_TACO1-like_dom3"/>
</dbReference>
<dbReference type="InterPro" id="IPR029072">
    <property type="entry name" value="YebC-like"/>
</dbReference>
<dbReference type="NCBIfam" id="NF001030">
    <property type="entry name" value="PRK00110.1"/>
    <property type="match status" value="1"/>
</dbReference>
<dbReference type="NCBIfam" id="NF009044">
    <property type="entry name" value="PRK12378.1"/>
    <property type="match status" value="1"/>
</dbReference>
<dbReference type="NCBIfam" id="TIGR01033">
    <property type="entry name" value="YebC/PmpR family DNA-binding transcriptional regulator"/>
    <property type="match status" value="1"/>
</dbReference>
<dbReference type="PANTHER" id="PTHR12532:SF6">
    <property type="entry name" value="TRANSCRIPTIONAL REGULATORY PROTEIN YEBC-RELATED"/>
    <property type="match status" value="1"/>
</dbReference>
<dbReference type="PANTHER" id="PTHR12532">
    <property type="entry name" value="TRANSLATIONAL ACTIVATOR OF CYTOCHROME C OXIDASE 1"/>
    <property type="match status" value="1"/>
</dbReference>
<dbReference type="Pfam" id="PF20772">
    <property type="entry name" value="TACO1_YebC_N"/>
    <property type="match status" value="1"/>
</dbReference>
<dbReference type="Pfam" id="PF01709">
    <property type="entry name" value="Transcrip_reg"/>
    <property type="match status" value="1"/>
</dbReference>
<dbReference type="SUPFAM" id="SSF75625">
    <property type="entry name" value="YebC-like"/>
    <property type="match status" value="1"/>
</dbReference>
<accession>A5VS72</accession>
<name>Y1660_BRUO2</name>
<sequence>MAGHSQFKNIMHRKGRQDAVRSKMFSKLAREITVAAKQGLPDPAMNPRLRLAIQNAKAQSMPKDNIERAIKKAAGNDGENYDEVRYEGRGPGGVSVIVEALTDNRNRTASNVRAAFTKSGGSLGETGSVSFMFDRVGEIVYKPEAGDADKVMEAAIEAGAEDVQSGEDGHVILCAFEDIGEVSKALEAALGEAESIKTIWKPQTNTELDEEKARSVLKLLSVLEDDDDVQNVYTNFEVSDEVMEKLSA</sequence>
<proteinExistence type="inferred from homology"/>
<protein>
    <recommendedName>
        <fullName evidence="1">Probable transcriptional regulatory protein BOV_1660</fullName>
    </recommendedName>
</protein>
<comment type="subcellular location">
    <subcellularLocation>
        <location evidence="1">Cytoplasm</location>
    </subcellularLocation>
</comment>
<comment type="similarity">
    <text evidence="1">Belongs to the TACO1 family.</text>
</comment>
<gene>
    <name type="ordered locus">BOV_1660</name>
</gene>
<reference key="1">
    <citation type="journal article" date="2009" name="PLoS ONE">
        <title>Genome degradation in Brucella ovis corresponds with narrowing of its host range and tissue tropism.</title>
        <authorList>
            <person name="Tsolis R.M."/>
            <person name="Seshadri R."/>
            <person name="Santos R.L."/>
            <person name="Sangari F.J."/>
            <person name="Lobo J.M."/>
            <person name="de Jong M.F."/>
            <person name="Ren Q."/>
            <person name="Myers G."/>
            <person name="Brinkac L.M."/>
            <person name="Nelson W.C."/>
            <person name="Deboy R.T."/>
            <person name="Angiuoli S."/>
            <person name="Khouri H."/>
            <person name="Dimitrov G."/>
            <person name="Robinson J.R."/>
            <person name="Mulligan S."/>
            <person name="Walker R.L."/>
            <person name="Elzer P.E."/>
            <person name="Hassan K.A."/>
            <person name="Paulsen I.T."/>
        </authorList>
    </citation>
    <scope>NUCLEOTIDE SEQUENCE [LARGE SCALE GENOMIC DNA]</scope>
    <source>
        <strain>ATCC 25840 / 63/290 / NCTC 10512</strain>
    </source>
</reference>
<feature type="chain" id="PRO_1000045279" description="Probable transcriptional regulatory protein BOV_1660">
    <location>
        <begin position="1"/>
        <end position="248"/>
    </location>
</feature>